<comment type="function">
    <text evidence="1">Component of the cytochrome b6-f complex, which mediates electron transfer between photosystem II (PSII) and photosystem I (PSI), cyclic electron flow around PSI, and state transitions. PetG is required for either the stability or assembly of the cytochrome b6-f complex.</text>
</comment>
<comment type="subunit">
    <text evidence="1">The 4 large subunits of the cytochrome b6-f complex are cytochrome b6, subunit IV (17 kDa polypeptide, PetD), cytochrome f and the Rieske protein, while the 4 small subunits are PetG, PetL, PetM and PetN. The complex functions as a dimer.</text>
</comment>
<comment type="subcellular location">
    <subcellularLocation>
        <location evidence="1">Plastid</location>
        <location evidence="1">Chloroplast thylakoid membrane</location>
        <topology evidence="1">Single-pass membrane protein</topology>
    </subcellularLocation>
</comment>
<comment type="similarity">
    <text evidence="1">Belongs to the PetG family.</text>
</comment>
<protein>
    <recommendedName>
        <fullName evidence="1">Cytochrome b6-f complex subunit 5</fullName>
    </recommendedName>
    <alternativeName>
        <fullName evidence="1">Cytochrome b6-f complex subunit PetG</fullName>
    </alternativeName>
    <alternativeName>
        <fullName evidence="1">Cytochrome b6-f complex subunit V</fullName>
    </alternativeName>
</protein>
<feature type="chain" id="PRO_0000355396" description="Cytochrome b6-f complex subunit 5">
    <location>
        <begin position="1"/>
        <end position="37"/>
    </location>
</feature>
<feature type="transmembrane region" description="Helical" evidence="1">
    <location>
        <begin position="5"/>
        <end position="25"/>
    </location>
</feature>
<proteinExistence type="inferred from homology"/>
<dbReference type="EMBL" id="AP009375">
    <property type="protein sequence ID" value="BAF50568.1"/>
    <property type="molecule type" value="Genomic_DNA"/>
</dbReference>
<dbReference type="RefSeq" id="YP_001123744.1">
    <property type="nucleotide sequence ID" value="NC_009274.1"/>
</dbReference>
<dbReference type="SMR" id="A4QLL3"/>
<dbReference type="GeneID" id="4964907"/>
<dbReference type="GO" id="GO:0009535">
    <property type="term" value="C:chloroplast thylakoid membrane"/>
    <property type="evidence" value="ECO:0007669"/>
    <property type="project" value="UniProtKB-SubCell"/>
</dbReference>
<dbReference type="GO" id="GO:0009512">
    <property type="term" value="C:cytochrome b6f complex"/>
    <property type="evidence" value="ECO:0007669"/>
    <property type="project" value="InterPro"/>
</dbReference>
<dbReference type="GO" id="GO:0045158">
    <property type="term" value="F:electron transporter, transferring electrons within cytochrome b6/f complex of photosystem II activity"/>
    <property type="evidence" value="ECO:0007669"/>
    <property type="project" value="UniProtKB-UniRule"/>
</dbReference>
<dbReference type="GO" id="GO:0017004">
    <property type="term" value="P:cytochrome complex assembly"/>
    <property type="evidence" value="ECO:0007669"/>
    <property type="project" value="UniProtKB-UniRule"/>
</dbReference>
<dbReference type="GO" id="GO:0015979">
    <property type="term" value="P:photosynthesis"/>
    <property type="evidence" value="ECO:0007669"/>
    <property type="project" value="UniProtKB-KW"/>
</dbReference>
<dbReference type="HAMAP" id="MF_00432">
    <property type="entry name" value="Cytb6_f_PetG"/>
    <property type="match status" value="1"/>
</dbReference>
<dbReference type="InterPro" id="IPR003683">
    <property type="entry name" value="Cyt_6/f_cplx_su5"/>
</dbReference>
<dbReference type="InterPro" id="IPR036099">
    <property type="entry name" value="Cyt_6/f_cplx_su5_sf"/>
</dbReference>
<dbReference type="NCBIfam" id="NF001907">
    <property type="entry name" value="PRK00665.1"/>
    <property type="match status" value="1"/>
</dbReference>
<dbReference type="Pfam" id="PF02529">
    <property type="entry name" value="PetG"/>
    <property type="match status" value="1"/>
</dbReference>
<dbReference type="PIRSF" id="PIRSF000034">
    <property type="entry name" value="Cyt_b6-f_V"/>
    <property type="match status" value="1"/>
</dbReference>
<dbReference type="SUPFAM" id="SSF103446">
    <property type="entry name" value="PetG subunit of the cytochrome b6f complex"/>
    <property type="match status" value="1"/>
</dbReference>
<keyword id="KW-0150">Chloroplast</keyword>
<keyword id="KW-0249">Electron transport</keyword>
<keyword id="KW-0472">Membrane</keyword>
<keyword id="KW-0602">Photosynthesis</keyword>
<keyword id="KW-0934">Plastid</keyword>
<keyword id="KW-0793">Thylakoid</keyword>
<keyword id="KW-0812">Transmembrane</keyword>
<keyword id="KW-1133">Transmembrane helix</keyword>
<keyword id="KW-0813">Transport</keyword>
<accession>A4QLL3</accession>
<name>PETG_LOBMA</name>
<organism>
    <name type="scientific">Lobularia maritima</name>
    <name type="common">Sweet alyssum</name>
    <name type="synonym">Alyssum maritimum</name>
    <dbReference type="NCBI Taxonomy" id="226051"/>
    <lineage>
        <taxon>Eukaryota</taxon>
        <taxon>Viridiplantae</taxon>
        <taxon>Streptophyta</taxon>
        <taxon>Embryophyta</taxon>
        <taxon>Tracheophyta</taxon>
        <taxon>Spermatophyta</taxon>
        <taxon>Magnoliopsida</taxon>
        <taxon>eudicotyledons</taxon>
        <taxon>Gunneridae</taxon>
        <taxon>Pentapetalae</taxon>
        <taxon>rosids</taxon>
        <taxon>malvids</taxon>
        <taxon>Brassicales</taxon>
        <taxon>Brassicaceae</taxon>
        <taxon>Anastaticeae</taxon>
        <taxon>Lobularia</taxon>
    </lineage>
</organism>
<geneLocation type="chloroplast"/>
<sequence length="37" mass="4144">MIEVSLFGIVLGLIPITLAGLFVTAYLQYRRGDQLDF</sequence>
<reference key="1">
    <citation type="submission" date="2007-03" db="EMBL/GenBank/DDBJ databases">
        <title>Sequencing analysis of Lobularia maritima chloroplast DNA.</title>
        <authorList>
            <person name="Hosouchi T."/>
            <person name="Tsuruoka H."/>
            <person name="Kotani H."/>
        </authorList>
    </citation>
    <scope>NUCLEOTIDE SEQUENCE [LARGE SCALE GENOMIC DNA]</scope>
</reference>
<evidence type="ECO:0000255" key="1">
    <source>
        <dbReference type="HAMAP-Rule" id="MF_00432"/>
    </source>
</evidence>
<gene>
    <name evidence="1" type="primary">petG</name>
</gene>